<reference key="1">
    <citation type="submission" date="2006-05" db="EMBL/GenBank/DDBJ databases">
        <authorList>
            <consortium name="Genoscope"/>
        </authorList>
    </citation>
    <scope>NUCLEOTIDE SEQUENCE [LARGE SCALE GENOMIC DNA]</scope>
    <source>
        <strain>RCC307</strain>
    </source>
</reference>
<name>PYRG_SYNR3</name>
<gene>
    <name evidence="1" type="primary">pyrG</name>
    <name type="ordered locus">SynRCC307_2442</name>
</gene>
<protein>
    <recommendedName>
        <fullName evidence="1">CTP synthase</fullName>
        <ecNumber evidence="1">6.3.4.2</ecNumber>
    </recommendedName>
    <alternativeName>
        <fullName evidence="1">Cytidine 5'-triphosphate synthase</fullName>
    </alternativeName>
    <alternativeName>
        <fullName evidence="1">Cytidine triphosphate synthetase</fullName>
        <shortName evidence="1">CTP synthetase</shortName>
        <shortName evidence="1">CTPS</shortName>
    </alternativeName>
    <alternativeName>
        <fullName evidence="1">UTP--ammonia ligase</fullName>
    </alternativeName>
</protein>
<comment type="function">
    <text evidence="1">Catalyzes the ATP-dependent amination of UTP to CTP with either L-glutamine or ammonia as the source of nitrogen. Regulates intracellular CTP levels through interactions with the four ribonucleotide triphosphates.</text>
</comment>
<comment type="catalytic activity">
    <reaction evidence="1">
        <text>UTP + L-glutamine + ATP + H2O = CTP + L-glutamate + ADP + phosphate + 2 H(+)</text>
        <dbReference type="Rhea" id="RHEA:26426"/>
        <dbReference type="ChEBI" id="CHEBI:15377"/>
        <dbReference type="ChEBI" id="CHEBI:15378"/>
        <dbReference type="ChEBI" id="CHEBI:29985"/>
        <dbReference type="ChEBI" id="CHEBI:30616"/>
        <dbReference type="ChEBI" id="CHEBI:37563"/>
        <dbReference type="ChEBI" id="CHEBI:43474"/>
        <dbReference type="ChEBI" id="CHEBI:46398"/>
        <dbReference type="ChEBI" id="CHEBI:58359"/>
        <dbReference type="ChEBI" id="CHEBI:456216"/>
        <dbReference type="EC" id="6.3.4.2"/>
    </reaction>
</comment>
<comment type="catalytic activity">
    <reaction evidence="1">
        <text>L-glutamine + H2O = L-glutamate + NH4(+)</text>
        <dbReference type="Rhea" id="RHEA:15889"/>
        <dbReference type="ChEBI" id="CHEBI:15377"/>
        <dbReference type="ChEBI" id="CHEBI:28938"/>
        <dbReference type="ChEBI" id="CHEBI:29985"/>
        <dbReference type="ChEBI" id="CHEBI:58359"/>
    </reaction>
</comment>
<comment type="catalytic activity">
    <reaction evidence="1">
        <text>UTP + NH4(+) + ATP = CTP + ADP + phosphate + 2 H(+)</text>
        <dbReference type="Rhea" id="RHEA:16597"/>
        <dbReference type="ChEBI" id="CHEBI:15378"/>
        <dbReference type="ChEBI" id="CHEBI:28938"/>
        <dbReference type="ChEBI" id="CHEBI:30616"/>
        <dbReference type="ChEBI" id="CHEBI:37563"/>
        <dbReference type="ChEBI" id="CHEBI:43474"/>
        <dbReference type="ChEBI" id="CHEBI:46398"/>
        <dbReference type="ChEBI" id="CHEBI:456216"/>
    </reaction>
</comment>
<comment type="activity regulation">
    <text evidence="1">Allosterically activated by GTP, when glutamine is the substrate; GTP has no effect on the reaction when ammonia is the substrate. The allosteric effector GTP functions by stabilizing the protein conformation that binds the tetrahedral intermediate(s) formed during glutamine hydrolysis. Inhibited by the product CTP, via allosteric rather than competitive inhibition.</text>
</comment>
<comment type="pathway">
    <text evidence="1">Pyrimidine metabolism; CTP biosynthesis via de novo pathway; CTP from UDP: step 2/2.</text>
</comment>
<comment type="subunit">
    <text evidence="1">Homotetramer.</text>
</comment>
<comment type="miscellaneous">
    <text evidence="1">CTPSs have evolved a hybrid strategy for distinguishing between UTP and CTP. The overlapping regions of the product feedback inhibitory and substrate sites recognize a common feature in both compounds, the triphosphate moiety. To differentiate isosteric substrate and product pyrimidine rings, an additional pocket far from the expected kinase/ligase catalytic site, specifically recognizes the cytosine and ribose portions of the product inhibitor.</text>
</comment>
<comment type="similarity">
    <text evidence="1">Belongs to the CTP synthase family.</text>
</comment>
<sequence length="544" mass="59402">MAKFVFVTGGVVSSIGKGIVAASLGRLLKSRGYRVSILKLDPYLNVDPGTMSPFQHGEVFVTEDGAETDLDLGHYERFTDTAMSRLNSVTTGSVYQSVINKERRGDYNGGTVQVIPHITGEIRERIHRVAANSNADVVITEIGGTVGDIESLPYLEAIREFRGDVGRNDLAYVHVTLLPYIGTSGELKTKPTQHSVKELRSIGIQPDILVCRSDRPIDDELKAKIGGFCGVPTKAVVPSLDADSIYAVPIALEKGGLCRQVLDVLSLQDHESDMASWEALVQKLRNPGPAVKVALVGKYVQLNDAYLSVVEALRHACIHCDSALDLHWICAEQIEENGADGLLKGMDAVVVPGGFGNRGVDGKIAAIRWAREQRVPFLGLCLGMQTAVIEWARNTAGLVGATSAELEPATTHPVIHLLPEQQDVVDLGGTMRLGVYPCRLSPGSKAHELYGEEVVYERHRHRYEFNNAYRNLFLESGYEISGVSPDGRLVELIELKGHPYFLACQYHPEFLSRPGRPHPLFTGLIQAASQRLPQSPSEAISQRA</sequence>
<dbReference type="EC" id="6.3.4.2" evidence="1"/>
<dbReference type="EMBL" id="CT978603">
    <property type="protein sequence ID" value="CAK29345.1"/>
    <property type="molecule type" value="Genomic_DNA"/>
</dbReference>
<dbReference type="SMR" id="A5GWT6"/>
<dbReference type="STRING" id="316278.SynRCC307_2442"/>
<dbReference type="KEGG" id="syr:SynRCC307_2442"/>
<dbReference type="eggNOG" id="COG0504">
    <property type="taxonomic scope" value="Bacteria"/>
</dbReference>
<dbReference type="HOGENOM" id="CLU_011675_5_0_3"/>
<dbReference type="OrthoDB" id="9801107at2"/>
<dbReference type="UniPathway" id="UPA00159">
    <property type="reaction ID" value="UER00277"/>
</dbReference>
<dbReference type="Proteomes" id="UP000001115">
    <property type="component" value="Chromosome"/>
</dbReference>
<dbReference type="GO" id="GO:0005829">
    <property type="term" value="C:cytosol"/>
    <property type="evidence" value="ECO:0007669"/>
    <property type="project" value="TreeGrafter"/>
</dbReference>
<dbReference type="GO" id="GO:0005524">
    <property type="term" value="F:ATP binding"/>
    <property type="evidence" value="ECO:0007669"/>
    <property type="project" value="UniProtKB-KW"/>
</dbReference>
<dbReference type="GO" id="GO:0003883">
    <property type="term" value="F:CTP synthase activity"/>
    <property type="evidence" value="ECO:0007669"/>
    <property type="project" value="UniProtKB-UniRule"/>
</dbReference>
<dbReference type="GO" id="GO:0004359">
    <property type="term" value="F:glutaminase activity"/>
    <property type="evidence" value="ECO:0007669"/>
    <property type="project" value="RHEA"/>
</dbReference>
<dbReference type="GO" id="GO:0042802">
    <property type="term" value="F:identical protein binding"/>
    <property type="evidence" value="ECO:0007669"/>
    <property type="project" value="TreeGrafter"/>
</dbReference>
<dbReference type="GO" id="GO:0046872">
    <property type="term" value="F:metal ion binding"/>
    <property type="evidence" value="ECO:0007669"/>
    <property type="project" value="UniProtKB-KW"/>
</dbReference>
<dbReference type="GO" id="GO:0044210">
    <property type="term" value="P:'de novo' CTP biosynthetic process"/>
    <property type="evidence" value="ECO:0007669"/>
    <property type="project" value="UniProtKB-UniRule"/>
</dbReference>
<dbReference type="GO" id="GO:0019856">
    <property type="term" value="P:pyrimidine nucleobase biosynthetic process"/>
    <property type="evidence" value="ECO:0007669"/>
    <property type="project" value="TreeGrafter"/>
</dbReference>
<dbReference type="CDD" id="cd03113">
    <property type="entry name" value="CTPS_N"/>
    <property type="match status" value="1"/>
</dbReference>
<dbReference type="CDD" id="cd01746">
    <property type="entry name" value="GATase1_CTP_Synthase"/>
    <property type="match status" value="1"/>
</dbReference>
<dbReference type="FunFam" id="3.40.50.300:FF:000009">
    <property type="entry name" value="CTP synthase"/>
    <property type="match status" value="1"/>
</dbReference>
<dbReference type="FunFam" id="3.40.50.880:FF:000002">
    <property type="entry name" value="CTP synthase"/>
    <property type="match status" value="1"/>
</dbReference>
<dbReference type="Gene3D" id="3.40.50.880">
    <property type="match status" value="1"/>
</dbReference>
<dbReference type="Gene3D" id="3.40.50.300">
    <property type="entry name" value="P-loop containing nucleotide triphosphate hydrolases"/>
    <property type="match status" value="1"/>
</dbReference>
<dbReference type="HAMAP" id="MF_01227">
    <property type="entry name" value="PyrG"/>
    <property type="match status" value="1"/>
</dbReference>
<dbReference type="InterPro" id="IPR029062">
    <property type="entry name" value="Class_I_gatase-like"/>
</dbReference>
<dbReference type="InterPro" id="IPR004468">
    <property type="entry name" value="CTP_synthase"/>
</dbReference>
<dbReference type="InterPro" id="IPR017456">
    <property type="entry name" value="CTP_synthase_N"/>
</dbReference>
<dbReference type="InterPro" id="IPR017926">
    <property type="entry name" value="GATASE"/>
</dbReference>
<dbReference type="InterPro" id="IPR033828">
    <property type="entry name" value="GATase1_CTP_Synthase"/>
</dbReference>
<dbReference type="InterPro" id="IPR027417">
    <property type="entry name" value="P-loop_NTPase"/>
</dbReference>
<dbReference type="NCBIfam" id="NF003792">
    <property type="entry name" value="PRK05380.1"/>
    <property type="match status" value="1"/>
</dbReference>
<dbReference type="NCBIfam" id="TIGR00337">
    <property type="entry name" value="PyrG"/>
    <property type="match status" value="1"/>
</dbReference>
<dbReference type="PANTHER" id="PTHR11550">
    <property type="entry name" value="CTP SYNTHASE"/>
    <property type="match status" value="1"/>
</dbReference>
<dbReference type="PANTHER" id="PTHR11550:SF0">
    <property type="entry name" value="CTP SYNTHASE-RELATED"/>
    <property type="match status" value="1"/>
</dbReference>
<dbReference type="Pfam" id="PF06418">
    <property type="entry name" value="CTP_synth_N"/>
    <property type="match status" value="1"/>
</dbReference>
<dbReference type="Pfam" id="PF00117">
    <property type="entry name" value="GATase"/>
    <property type="match status" value="1"/>
</dbReference>
<dbReference type="SUPFAM" id="SSF52317">
    <property type="entry name" value="Class I glutamine amidotransferase-like"/>
    <property type="match status" value="1"/>
</dbReference>
<dbReference type="SUPFAM" id="SSF52540">
    <property type="entry name" value="P-loop containing nucleoside triphosphate hydrolases"/>
    <property type="match status" value="1"/>
</dbReference>
<dbReference type="PROSITE" id="PS51273">
    <property type="entry name" value="GATASE_TYPE_1"/>
    <property type="match status" value="1"/>
</dbReference>
<proteinExistence type="inferred from homology"/>
<keyword id="KW-0067">ATP-binding</keyword>
<keyword id="KW-0315">Glutamine amidotransferase</keyword>
<keyword id="KW-0436">Ligase</keyword>
<keyword id="KW-0460">Magnesium</keyword>
<keyword id="KW-0479">Metal-binding</keyword>
<keyword id="KW-0547">Nucleotide-binding</keyword>
<keyword id="KW-0665">Pyrimidine biosynthesis</keyword>
<keyword id="KW-1185">Reference proteome</keyword>
<evidence type="ECO:0000255" key="1">
    <source>
        <dbReference type="HAMAP-Rule" id="MF_01227"/>
    </source>
</evidence>
<feature type="chain" id="PRO_1000139595" description="CTP synthase">
    <location>
        <begin position="1"/>
        <end position="544"/>
    </location>
</feature>
<feature type="domain" description="Glutamine amidotransferase type-1" evidence="1">
    <location>
        <begin position="292"/>
        <end position="534"/>
    </location>
</feature>
<feature type="region of interest" description="Amidoligase domain" evidence="1">
    <location>
        <begin position="1"/>
        <end position="267"/>
    </location>
</feature>
<feature type="active site" description="Nucleophile; for glutamine hydrolysis" evidence="1">
    <location>
        <position position="381"/>
    </location>
</feature>
<feature type="active site" evidence="1">
    <location>
        <position position="507"/>
    </location>
</feature>
<feature type="active site" evidence="1">
    <location>
        <position position="509"/>
    </location>
</feature>
<feature type="binding site" evidence="1">
    <location>
        <position position="13"/>
    </location>
    <ligand>
        <name>CTP</name>
        <dbReference type="ChEBI" id="CHEBI:37563"/>
        <note>allosteric inhibitor</note>
    </ligand>
</feature>
<feature type="binding site" evidence="1">
    <location>
        <position position="13"/>
    </location>
    <ligand>
        <name>UTP</name>
        <dbReference type="ChEBI" id="CHEBI:46398"/>
    </ligand>
</feature>
<feature type="binding site" evidence="1">
    <location>
        <begin position="14"/>
        <end position="19"/>
    </location>
    <ligand>
        <name>ATP</name>
        <dbReference type="ChEBI" id="CHEBI:30616"/>
    </ligand>
</feature>
<feature type="binding site" evidence="1">
    <location>
        <position position="71"/>
    </location>
    <ligand>
        <name>ATP</name>
        <dbReference type="ChEBI" id="CHEBI:30616"/>
    </ligand>
</feature>
<feature type="binding site" evidence="1">
    <location>
        <position position="71"/>
    </location>
    <ligand>
        <name>Mg(2+)</name>
        <dbReference type="ChEBI" id="CHEBI:18420"/>
    </ligand>
</feature>
<feature type="binding site" evidence="1">
    <location>
        <position position="141"/>
    </location>
    <ligand>
        <name>Mg(2+)</name>
        <dbReference type="ChEBI" id="CHEBI:18420"/>
    </ligand>
</feature>
<feature type="binding site" evidence="1">
    <location>
        <begin position="148"/>
        <end position="150"/>
    </location>
    <ligand>
        <name>CTP</name>
        <dbReference type="ChEBI" id="CHEBI:37563"/>
        <note>allosteric inhibitor</note>
    </ligand>
</feature>
<feature type="binding site" evidence="1">
    <location>
        <begin position="188"/>
        <end position="193"/>
    </location>
    <ligand>
        <name>CTP</name>
        <dbReference type="ChEBI" id="CHEBI:37563"/>
        <note>allosteric inhibitor</note>
    </ligand>
</feature>
<feature type="binding site" evidence="1">
    <location>
        <begin position="188"/>
        <end position="193"/>
    </location>
    <ligand>
        <name>UTP</name>
        <dbReference type="ChEBI" id="CHEBI:46398"/>
    </ligand>
</feature>
<feature type="binding site" evidence="1">
    <location>
        <position position="224"/>
    </location>
    <ligand>
        <name>CTP</name>
        <dbReference type="ChEBI" id="CHEBI:37563"/>
        <note>allosteric inhibitor</note>
    </ligand>
</feature>
<feature type="binding site" evidence="1">
    <location>
        <position position="224"/>
    </location>
    <ligand>
        <name>UTP</name>
        <dbReference type="ChEBI" id="CHEBI:46398"/>
    </ligand>
</feature>
<feature type="binding site" evidence="1">
    <location>
        <position position="354"/>
    </location>
    <ligand>
        <name>L-glutamine</name>
        <dbReference type="ChEBI" id="CHEBI:58359"/>
    </ligand>
</feature>
<feature type="binding site" evidence="1">
    <location>
        <begin position="382"/>
        <end position="385"/>
    </location>
    <ligand>
        <name>L-glutamine</name>
        <dbReference type="ChEBI" id="CHEBI:58359"/>
    </ligand>
</feature>
<feature type="binding site" evidence="1">
    <location>
        <position position="405"/>
    </location>
    <ligand>
        <name>L-glutamine</name>
        <dbReference type="ChEBI" id="CHEBI:58359"/>
    </ligand>
</feature>
<feature type="binding site" evidence="1">
    <location>
        <position position="462"/>
    </location>
    <ligand>
        <name>L-glutamine</name>
        <dbReference type="ChEBI" id="CHEBI:58359"/>
    </ligand>
</feature>
<accession>A5GWT6</accession>
<organism>
    <name type="scientific">Synechococcus sp. (strain RCC307)</name>
    <dbReference type="NCBI Taxonomy" id="316278"/>
    <lineage>
        <taxon>Bacteria</taxon>
        <taxon>Bacillati</taxon>
        <taxon>Cyanobacteriota</taxon>
        <taxon>Cyanophyceae</taxon>
        <taxon>Synechococcales</taxon>
        <taxon>Synechococcaceae</taxon>
        <taxon>Synechococcus</taxon>
    </lineage>
</organism>